<proteinExistence type="inferred from homology"/>
<accession>Q97QC5</accession>
<keyword id="KW-1003">Cell membrane</keyword>
<keyword id="KW-0407">Ion channel</keyword>
<keyword id="KW-0406">Ion transport</keyword>
<keyword id="KW-0472">Membrane</keyword>
<keyword id="KW-0479">Metal-binding</keyword>
<keyword id="KW-1185">Reference proteome</keyword>
<keyword id="KW-0915">Sodium</keyword>
<keyword id="KW-0812">Transmembrane</keyword>
<keyword id="KW-1133">Transmembrane helix</keyword>
<keyword id="KW-0813">Transport</keyword>
<organism>
    <name type="scientific">Streptococcus pneumoniae serotype 4 (strain ATCC BAA-334 / TIGR4)</name>
    <dbReference type="NCBI Taxonomy" id="170187"/>
    <lineage>
        <taxon>Bacteria</taxon>
        <taxon>Bacillati</taxon>
        <taxon>Bacillota</taxon>
        <taxon>Bacilli</taxon>
        <taxon>Lactobacillales</taxon>
        <taxon>Streptococcaceae</taxon>
        <taxon>Streptococcus</taxon>
    </lineage>
</organism>
<sequence>MVIVYLAIACGLGALVRYFFSRYNQASKLPLGTLIANLLGCFLIGVFYNHVESKEVYAILATGFCGGLTTFSTLNDELQRLLSDKKVFYSYLTLTYIGGLVAIFLGILL</sequence>
<name>FLUC1_STRPN</name>
<feature type="chain" id="PRO_0000110194" description="Fluoride-specific ion channel FluC 1">
    <location>
        <begin position="1"/>
        <end position="109"/>
    </location>
</feature>
<feature type="transmembrane region" description="Helical" evidence="1">
    <location>
        <begin position="1"/>
        <end position="21"/>
    </location>
</feature>
<feature type="transmembrane region" description="Helical" evidence="1">
    <location>
        <begin position="29"/>
        <end position="49"/>
    </location>
</feature>
<feature type="transmembrane region" description="Helical" evidence="1">
    <location>
        <begin position="55"/>
        <end position="75"/>
    </location>
</feature>
<feature type="transmembrane region" description="Helical" evidence="1">
    <location>
        <begin position="87"/>
        <end position="107"/>
    </location>
</feature>
<feature type="binding site" evidence="1">
    <location>
        <position position="66"/>
    </location>
    <ligand>
        <name>Na(+)</name>
        <dbReference type="ChEBI" id="CHEBI:29101"/>
        <note>structural</note>
    </ligand>
</feature>
<feature type="binding site" evidence="1">
    <location>
        <position position="69"/>
    </location>
    <ligand>
        <name>Na(+)</name>
        <dbReference type="ChEBI" id="CHEBI:29101"/>
        <note>structural</note>
    </ligand>
</feature>
<dbReference type="EMBL" id="AE005672">
    <property type="protein sequence ID" value="AAK75398.1"/>
    <property type="molecule type" value="Genomic_DNA"/>
</dbReference>
<dbReference type="PIR" id="E95150">
    <property type="entry name" value="E95150"/>
</dbReference>
<dbReference type="SMR" id="Q97QC5"/>
<dbReference type="PaxDb" id="170187-SP_1294"/>
<dbReference type="EnsemblBacteria" id="AAK75398">
    <property type="protein sequence ID" value="AAK75398"/>
    <property type="gene ID" value="SP_1294"/>
</dbReference>
<dbReference type="KEGG" id="spn:SP_1294"/>
<dbReference type="eggNOG" id="COG0239">
    <property type="taxonomic scope" value="Bacteria"/>
</dbReference>
<dbReference type="PhylomeDB" id="Q97QC5"/>
<dbReference type="BioCyc" id="SPNE170187:G1FZB-1308-MONOMER"/>
<dbReference type="Proteomes" id="UP000000585">
    <property type="component" value="Chromosome"/>
</dbReference>
<dbReference type="GO" id="GO:0005886">
    <property type="term" value="C:plasma membrane"/>
    <property type="evidence" value="ECO:0007669"/>
    <property type="project" value="UniProtKB-SubCell"/>
</dbReference>
<dbReference type="GO" id="GO:0062054">
    <property type="term" value="F:fluoride channel activity"/>
    <property type="evidence" value="ECO:0007669"/>
    <property type="project" value="UniProtKB-UniRule"/>
</dbReference>
<dbReference type="GO" id="GO:0046872">
    <property type="term" value="F:metal ion binding"/>
    <property type="evidence" value="ECO:0007669"/>
    <property type="project" value="UniProtKB-KW"/>
</dbReference>
<dbReference type="GO" id="GO:0140114">
    <property type="term" value="P:cellular detoxification of fluoride"/>
    <property type="evidence" value="ECO:0007669"/>
    <property type="project" value="UniProtKB-UniRule"/>
</dbReference>
<dbReference type="HAMAP" id="MF_00454">
    <property type="entry name" value="FluC"/>
    <property type="match status" value="1"/>
</dbReference>
<dbReference type="InterPro" id="IPR003691">
    <property type="entry name" value="FluC"/>
</dbReference>
<dbReference type="NCBIfam" id="NF010825">
    <property type="entry name" value="PRK14229.1"/>
    <property type="match status" value="1"/>
</dbReference>
<dbReference type="PANTHER" id="PTHR28259">
    <property type="entry name" value="FLUORIDE EXPORT PROTEIN 1-RELATED"/>
    <property type="match status" value="1"/>
</dbReference>
<dbReference type="PANTHER" id="PTHR28259:SF1">
    <property type="entry name" value="FLUORIDE EXPORT PROTEIN 1-RELATED"/>
    <property type="match status" value="1"/>
</dbReference>
<dbReference type="Pfam" id="PF02537">
    <property type="entry name" value="CRCB"/>
    <property type="match status" value="1"/>
</dbReference>
<reference key="1">
    <citation type="journal article" date="2001" name="Science">
        <title>Complete genome sequence of a virulent isolate of Streptococcus pneumoniae.</title>
        <authorList>
            <person name="Tettelin H."/>
            <person name="Nelson K.E."/>
            <person name="Paulsen I.T."/>
            <person name="Eisen J.A."/>
            <person name="Read T.D."/>
            <person name="Peterson S.N."/>
            <person name="Heidelberg J.F."/>
            <person name="DeBoy R.T."/>
            <person name="Haft D.H."/>
            <person name="Dodson R.J."/>
            <person name="Durkin A.S."/>
            <person name="Gwinn M.L."/>
            <person name="Kolonay J.F."/>
            <person name="Nelson W.C."/>
            <person name="Peterson J.D."/>
            <person name="Umayam L.A."/>
            <person name="White O."/>
            <person name="Salzberg S.L."/>
            <person name="Lewis M.R."/>
            <person name="Radune D."/>
            <person name="Holtzapple E.K."/>
            <person name="Khouri H.M."/>
            <person name="Wolf A.M."/>
            <person name="Utterback T.R."/>
            <person name="Hansen C.L."/>
            <person name="McDonald L.A."/>
            <person name="Feldblyum T.V."/>
            <person name="Angiuoli S.V."/>
            <person name="Dickinson T."/>
            <person name="Hickey E.K."/>
            <person name="Holt I.E."/>
            <person name="Loftus B.J."/>
            <person name="Yang F."/>
            <person name="Smith H.O."/>
            <person name="Venter J.C."/>
            <person name="Dougherty B.A."/>
            <person name="Morrison D.A."/>
            <person name="Hollingshead S.K."/>
            <person name="Fraser C.M."/>
        </authorList>
    </citation>
    <scope>NUCLEOTIDE SEQUENCE [LARGE SCALE GENOMIC DNA]</scope>
    <source>
        <strain>ATCC BAA-334 / TIGR4</strain>
    </source>
</reference>
<evidence type="ECO:0000255" key="1">
    <source>
        <dbReference type="HAMAP-Rule" id="MF_00454"/>
    </source>
</evidence>
<comment type="function">
    <text evidence="1">Fluoride-specific ion channel. Important for reducing fluoride concentration in the cell, thus reducing its toxicity.</text>
</comment>
<comment type="catalytic activity">
    <reaction evidence="1">
        <text>fluoride(in) = fluoride(out)</text>
        <dbReference type="Rhea" id="RHEA:76159"/>
        <dbReference type="ChEBI" id="CHEBI:17051"/>
    </reaction>
    <physiologicalReaction direction="left-to-right" evidence="1">
        <dbReference type="Rhea" id="RHEA:76160"/>
    </physiologicalReaction>
</comment>
<comment type="activity regulation">
    <text evidence="1">Na(+) is not transported, but it plays an essential structural role and its presence is essential for fluoride channel function.</text>
</comment>
<comment type="subcellular location">
    <subcellularLocation>
        <location evidence="1">Cell membrane</location>
        <topology evidence="1">Multi-pass membrane protein</topology>
    </subcellularLocation>
</comment>
<comment type="similarity">
    <text evidence="1">Belongs to the fluoride channel Fluc/FEX (TC 1.A.43) family.</text>
</comment>
<protein>
    <recommendedName>
        <fullName evidence="1">Fluoride-specific ion channel FluC 1</fullName>
    </recommendedName>
</protein>
<gene>
    <name evidence="1" type="primary">fluC1</name>
    <name evidence="1" type="synonym">crcB1</name>
    <name type="ordered locus">SP_1294</name>
</gene>